<accession>P45292</accession>
<reference key="1">
    <citation type="journal article" date="1995" name="Science">
        <title>Whole-genome random sequencing and assembly of Haemophilus influenzae Rd.</title>
        <authorList>
            <person name="Fleischmann R.D."/>
            <person name="Adams M.D."/>
            <person name="White O."/>
            <person name="Clayton R.A."/>
            <person name="Kirkness E.F."/>
            <person name="Kerlavage A.R."/>
            <person name="Bult C.J."/>
            <person name="Tomb J.-F."/>
            <person name="Dougherty B.A."/>
            <person name="Merrick J.M."/>
            <person name="McKenney K."/>
            <person name="Sutton G.G."/>
            <person name="FitzHugh W."/>
            <person name="Fields C.A."/>
            <person name="Gocayne J.D."/>
            <person name="Scott J.D."/>
            <person name="Shirley R."/>
            <person name="Liu L.-I."/>
            <person name="Glodek A."/>
            <person name="Kelley J.M."/>
            <person name="Weidman J.F."/>
            <person name="Phillips C.A."/>
            <person name="Spriggs T."/>
            <person name="Hedblom E."/>
            <person name="Cotton M.D."/>
            <person name="Utterback T.R."/>
            <person name="Hanna M.C."/>
            <person name="Nguyen D.T."/>
            <person name="Saudek D.M."/>
            <person name="Brandon R.C."/>
            <person name="Fine L.D."/>
            <person name="Fritchman J.L."/>
            <person name="Fuhrmann J.L."/>
            <person name="Geoghagen N.S.M."/>
            <person name="Gnehm C.L."/>
            <person name="McDonald L.A."/>
            <person name="Small K.V."/>
            <person name="Fraser C.M."/>
            <person name="Smith H.O."/>
            <person name="Venter J.C."/>
        </authorList>
    </citation>
    <scope>NUCLEOTIDE SEQUENCE [LARGE SCALE GENOMIC DNA]</scope>
    <source>
        <strain>ATCC 51907 / DSM 11121 / KW20 / Rd</strain>
    </source>
</reference>
<sequence length="333" mass="37077">MKTLSEFIVERQAEYPNAKGELSGILSSIRLLAKIIHRDINKAGLTNILGQSGIENVQGESQMKLDLFAHNTMKAALMAREEVAGFASEEEESFIAFDTERGRNAKYIILTDPLDGSSNIDVNVSVGTIFSIYRRVSPIGSPVTLEDFMQPGNKQVAAGYIVYGSSTMLVYTTGNGVNGFTYDPSIGTFCLSHENMQMPKEGKIYSINEGQYLKFPQGVKKYIKYCQEEDKATHRPYVSRYIGSLVADFHRNLLKGGIYIYPSATNYPNGKLRLLYEGNPIAFLAEQAGGVATDGYRRILDIEPTALHERVPLFVGSEDMVKKAQEMMEEFKE</sequence>
<protein>
    <recommendedName>
        <fullName evidence="1">Fructose-1,6-bisphosphatase class 1</fullName>
        <shortName evidence="1">FBPase class 1</shortName>
        <ecNumber evidence="1">3.1.3.11</ecNumber>
    </recommendedName>
    <alternativeName>
        <fullName evidence="1">D-fructose-1,6-bisphosphate 1-phosphohydrolase class 1</fullName>
    </alternativeName>
</protein>
<proteinExistence type="inferred from homology"/>
<evidence type="ECO:0000255" key="1">
    <source>
        <dbReference type="HAMAP-Rule" id="MF_01855"/>
    </source>
</evidence>
<organism>
    <name type="scientific">Haemophilus influenzae (strain ATCC 51907 / DSM 11121 / KW20 / Rd)</name>
    <dbReference type="NCBI Taxonomy" id="71421"/>
    <lineage>
        <taxon>Bacteria</taxon>
        <taxon>Pseudomonadati</taxon>
        <taxon>Pseudomonadota</taxon>
        <taxon>Gammaproteobacteria</taxon>
        <taxon>Pasteurellales</taxon>
        <taxon>Pasteurellaceae</taxon>
        <taxon>Haemophilus</taxon>
    </lineage>
</organism>
<keyword id="KW-0119">Carbohydrate metabolism</keyword>
<keyword id="KW-0963">Cytoplasm</keyword>
<keyword id="KW-0378">Hydrolase</keyword>
<keyword id="KW-0460">Magnesium</keyword>
<keyword id="KW-0479">Metal-binding</keyword>
<keyword id="KW-1185">Reference proteome</keyword>
<dbReference type="EC" id="3.1.3.11" evidence="1"/>
<dbReference type="EMBL" id="L42023">
    <property type="protein sequence ID" value="AAC23292.1"/>
    <property type="molecule type" value="Genomic_DNA"/>
</dbReference>
<dbReference type="PIR" id="G64134">
    <property type="entry name" value="G64134"/>
</dbReference>
<dbReference type="RefSeq" id="NP_439787.1">
    <property type="nucleotide sequence ID" value="NC_000907.1"/>
</dbReference>
<dbReference type="SMR" id="P45292"/>
<dbReference type="STRING" id="71421.HI_1645"/>
<dbReference type="EnsemblBacteria" id="AAC23292">
    <property type="protein sequence ID" value="AAC23292"/>
    <property type="gene ID" value="HI_1645"/>
</dbReference>
<dbReference type="KEGG" id="hin:HI_1645"/>
<dbReference type="PATRIC" id="fig|71421.8.peg.1721"/>
<dbReference type="eggNOG" id="COG0158">
    <property type="taxonomic scope" value="Bacteria"/>
</dbReference>
<dbReference type="HOGENOM" id="CLU_039977_2_2_6"/>
<dbReference type="OrthoDB" id="9806756at2"/>
<dbReference type="PhylomeDB" id="P45292"/>
<dbReference type="BioCyc" id="HINF71421:G1GJ1-1662-MONOMER"/>
<dbReference type="UniPathway" id="UPA00138"/>
<dbReference type="Proteomes" id="UP000000579">
    <property type="component" value="Chromosome"/>
</dbReference>
<dbReference type="GO" id="GO:0005737">
    <property type="term" value="C:cytoplasm"/>
    <property type="evidence" value="ECO:0000318"/>
    <property type="project" value="GO_Central"/>
</dbReference>
<dbReference type="GO" id="GO:0005829">
    <property type="term" value="C:cytosol"/>
    <property type="evidence" value="ECO:0000318"/>
    <property type="project" value="GO_Central"/>
</dbReference>
<dbReference type="GO" id="GO:0042132">
    <property type="term" value="F:fructose 1,6-bisphosphate 1-phosphatase activity"/>
    <property type="evidence" value="ECO:0000318"/>
    <property type="project" value="GO_Central"/>
</dbReference>
<dbReference type="GO" id="GO:0000287">
    <property type="term" value="F:magnesium ion binding"/>
    <property type="evidence" value="ECO:0007669"/>
    <property type="project" value="UniProtKB-UniRule"/>
</dbReference>
<dbReference type="GO" id="GO:0030388">
    <property type="term" value="P:fructose 1,6-bisphosphate metabolic process"/>
    <property type="evidence" value="ECO:0000318"/>
    <property type="project" value="GO_Central"/>
</dbReference>
<dbReference type="GO" id="GO:0006002">
    <property type="term" value="P:fructose 6-phosphate metabolic process"/>
    <property type="evidence" value="ECO:0000318"/>
    <property type="project" value="GO_Central"/>
</dbReference>
<dbReference type="GO" id="GO:0006000">
    <property type="term" value="P:fructose metabolic process"/>
    <property type="evidence" value="ECO:0000318"/>
    <property type="project" value="GO_Central"/>
</dbReference>
<dbReference type="GO" id="GO:0006094">
    <property type="term" value="P:gluconeogenesis"/>
    <property type="evidence" value="ECO:0000318"/>
    <property type="project" value="GO_Central"/>
</dbReference>
<dbReference type="CDD" id="cd00354">
    <property type="entry name" value="FBPase"/>
    <property type="match status" value="1"/>
</dbReference>
<dbReference type="FunFam" id="3.30.540.10:FF:000002">
    <property type="entry name" value="Fructose-1,6-bisphosphatase class 1"/>
    <property type="match status" value="1"/>
</dbReference>
<dbReference type="FunFam" id="3.40.190.80:FF:000001">
    <property type="entry name" value="Fructose-1,6-bisphosphatase class 1"/>
    <property type="match status" value="1"/>
</dbReference>
<dbReference type="Gene3D" id="3.40.190.80">
    <property type="match status" value="1"/>
</dbReference>
<dbReference type="Gene3D" id="3.30.540.10">
    <property type="entry name" value="Fructose-1,6-Bisphosphatase, subunit A, domain 1"/>
    <property type="match status" value="1"/>
</dbReference>
<dbReference type="HAMAP" id="MF_01855">
    <property type="entry name" value="FBPase_class1"/>
    <property type="match status" value="1"/>
</dbReference>
<dbReference type="InterPro" id="IPR044015">
    <property type="entry name" value="FBPase_C_dom"/>
</dbReference>
<dbReference type="InterPro" id="IPR000146">
    <property type="entry name" value="FBPase_class-1"/>
</dbReference>
<dbReference type="InterPro" id="IPR033391">
    <property type="entry name" value="FBPase_N"/>
</dbReference>
<dbReference type="InterPro" id="IPR028343">
    <property type="entry name" value="FBPtase"/>
</dbReference>
<dbReference type="InterPro" id="IPR020548">
    <property type="entry name" value="Fructose_bisphosphatase_AS"/>
</dbReference>
<dbReference type="NCBIfam" id="NF006778">
    <property type="entry name" value="PRK09293.1-1"/>
    <property type="match status" value="1"/>
</dbReference>
<dbReference type="PANTHER" id="PTHR11556">
    <property type="entry name" value="FRUCTOSE-1,6-BISPHOSPHATASE-RELATED"/>
    <property type="match status" value="1"/>
</dbReference>
<dbReference type="PANTHER" id="PTHR11556:SF35">
    <property type="entry name" value="SEDOHEPTULOSE-1,7-BISPHOSPHATASE, CHLOROPLASTIC"/>
    <property type="match status" value="1"/>
</dbReference>
<dbReference type="Pfam" id="PF00316">
    <property type="entry name" value="FBPase"/>
    <property type="match status" value="1"/>
</dbReference>
<dbReference type="Pfam" id="PF18913">
    <property type="entry name" value="FBPase_C"/>
    <property type="match status" value="1"/>
</dbReference>
<dbReference type="PIRSF" id="PIRSF500210">
    <property type="entry name" value="FBPtase"/>
    <property type="match status" value="1"/>
</dbReference>
<dbReference type="PIRSF" id="PIRSF000904">
    <property type="entry name" value="FBPtase_SBPase"/>
    <property type="match status" value="1"/>
</dbReference>
<dbReference type="PRINTS" id="PR00115">
    <property type="entry name" value="F16BPHPHTASE"/>
</dbReference>
<dbReference type="SUPFAM" id="SSF56655">
    <property type="entry name" value="Carbohydrate phosphatase"/>
    <property type="match status" value="1"/>
</dbReference>
<dbReference type="PROSITE" id="PS00124">
    <property type="entry name" value="FBPASE"/>
    <property type="match status" value="1"/>
</dbReference>
<gene>
    <name evidence="1" type="primary">fbp</name>
    <name type="ordered locus">HI_1645</name>
</gene>
<feature type="chain" id="PRO_0000200494" description="Fructose-1,6-bisphosphatase class 1">
    <location>
        <begin position="1"/>
        <end position="333"/>
    </location>
</feature>
<feature type="binding site" evidence="1">
    <location>
        <position position="89"/>
    </location>
    <ligand>
        <name>Mg(2+)</name>
        <dbReference type="ChEBI" id="CHEBI:18420"/>
        <label>1</label>
    </ligand>
</feature>
<feature type="binding site" evidence="1">
    <location>
        <position position="112"/>
    </location>
    <ligand>
        <name>Mg(2+)</name>
        <dbReference type="ChEBI" id="CHEBI:18420"/>
        <label>1</label>
    </ligand>
</feature>
<feature type="binding site" evidence="1">
    <location>
        <position position="112"/>
    </location>
    <ligand>
        <name>Mg(2+)</name>
        <dbReference type="ChEBI" id="CHEBI:18420"/>
        <label>2</label>
    </ligand>
</feature>
<feature type="binding site" evidence="1">
    <location>
        <position position="114"/>
    </location>
    <ligand>
        <name>Mg(2+)</name>
        <dbReference type="ChEBI" id="CHEBI:18420"/>
        <label>1</label>
    </ligand>
</feature>
<feature type="binding site" evidence="1">
    <location>
        <begin position="115"/>
        <end position="118"/>
    </location>
    <ligand>
        <name>substrate</name>
    </ligand>
</feature>
<feature type="binding site" evidence="1">
    <location>
        <position position="115"/>
    </location>
    <ligand>
        <name>Mg(2+)</name>
        <dbReference type="ChEBI" id="CHEBI:18420"/>
        <label>2</label>
    </ligand>
</feature>
<feature type="binding site" evidence="1">
    <location>
        <position position="208"/>
    </location>
    <ligand>
        <name>substrate</name>
    </ligand>
</feature>
<feature type="binding site" evidence="1">
    <location>
        <position position="241"/>
    </location>
    <ligand>
        <name>substrate</name>
    </ligand>
</feature>
<feature type="binding site" evidence="1">
    <location>
        <position position="271"/>
    </location>
    <ligand>
        <name>substrate</name>
    </ligand>
</feature>
<feature type="binding site" evidence="1">
    <location>
        <position position="277"/>
    </location>
    <ligand>
        <name>Mg(2+)</name>
        <dbReference type="ChEBI" id="CHEBI:18420"/>
        <label>2</label>
    </ligand>
</feature>
<name>F16PA_HAEIN</name>
<comment type="catalytic activity">
    <reaction evidence="1">
        <text>beta-D-fructose 1,6-bisphosphate + H2O = beta-D-fructose 6-phosphate + phosphate</text>
        <dbReference type="Rhea" id="RHEA:11064"/>
        <dbReference type="ChEBI" id="CHEBI:15377"/>
        <dbReference type="ChEBI" id="CHEBI:32966"/>
        <dbReference type="ChEBI" id="CHEBI:43474"/>
        <dbReference type="ChEBI" id="CHEBI:57634"/>
        <dbReference type="EC" id="3.1.3.11"/>
    </reaction>
</comment>
<comment type="cofactor">
    <cofactor evidence="1">
        <name>Mg(2+)</name>
        <dbReference type="ChEBI" id="CHEBI:18420"/>
    </cofactor>
    <text evidence="1">Binds 2 magnesium ions per subunit.</text>
</comment>
<comment type="pathway">
    <text evidence="1">Carbohydrate biosynthesis; gluconeogenesis.</text>
</comment>
<comment type="subunit">
    <text evidence="1">Homotetramer.</text>
</comment>
<comment type="subcellular location">
    <subcellularLocation>
        <location evidence="1">Cytoplasm</location>
    </subcellularLocation>
</comment>
<comment type="similarity">
    <text evidence="1">Belongs to the FBPase class 1 family.</text>
</comment>